<gene>
    <name evidence="1" type="primary">E7</name>
</gene>
<dbReference type="EMBL" id="X55964">
    <property type="status" value="NOT_ANNOTATED_CDS"/>
    <property type="molecule type" value="Genomic_DNA"/>
</dbReference>
<dbReference type="PIR" id="S15615">
    <property type="entry name" value="S15615"/>
</dbReference>
<dbReference type="SMR" id="P25485"/>
<dbReference type="Proteomes" id="UP000007710">
    <property type="component" value="Segment"/>
</dbReference>
<dbReference type="GO" id="GO:0030430">
    <property type="term" value="C:host cell cytoplasm"/>
    <property type="evidence" value="ECO:0007669"/>
    <property type="project" value="UniProtKB-SubCell"/>
</dbReference>
<dbReference type="GO" id="GO:0042025">
    <property type="term" value="C:host cell nucleus"/>
    <property type="evidence" value="ECO:0007669"/>
    <property type="project" value="UniProtKB-SubCell"/>
</dbReference>
<dbReference type="GO" id="GO:0003677">
    <property type="term" value="F:DNA binding"/>
    <property type="evidence" value="ECO:0007669"/>
    <property type="project" value="UniProtKB-UniRule"/>
</dbReference>
<dbReference type="GO" id="GO:0003700">
    <property type="term" value="F:DNA-binding transcription factor activity"/>
    <property type="evidence" value="ECO:0007669"/>
    <property type="project" value="UniProtKB-UniRule"/>
</dbReference>
<dbReference type="GO" id="GO:0019904">
    <property type="term" value="F:protein domain specific binding"/>
    <property type="evidence" value="ECO:0007669"/>
    <property type="project" value="UniProtKB-UniRule"/>
</dbReference>
<dbReference type="GO" id="GO:0008270">
    <property type="term" value="F:zinc ion binding"/>
    <property type="evidence" value="ECO:0007669"/>
    <property type="project" value="UniProtKB-KW"/>
</dbReference>
<dbReference type="GO" id="GO:0006351">
    <property type="term" value="P:DNA-templated transcription"/>
    <property type="evidence" value="ECO:0007669"/>
    <property type="project" value="UniProtKB-UniRule"/>
</dbReference>
<dbReference type="GO" id="GO:0039645">
    <property type="term" value="P:symbiont-mediated perturbation of host cell cycle G1/S transition checkpoint"/>
    <property type="evidence" value="ECO:0007669"/>
    <property type="project" value="UniProtKB-UniRule"/>
</dbReference>
<dbReference type="GO" id="GO:0052170">
    <property type="term" value="P:symbiont-mediated suppression of host innate immune response"/>
    <property type="evidence" value="ECO:0007669"/>
    <property type="project" value="UniProtKB-KW"/>
</dbReference>
<dbReference type="GO" id="GO:0039502">
    <property type="term" value="P:symbiont-mediated suppression of host type I interferon-mediated signaling pathway"/>
    <property type="evidence" value="ECO:0007669"/>
    <property type="project" value="UniProtKB-UniRule"/>
</dbReference>
<dbReference type="Gene3D" id="3.30.160.330">
    <property type="match status" value="1"/>
</dbReference>
<dbReference type="HAMAP" id="MF_04004">
    <property type="entry name" value="PPV_E7"/>
    <property type="match status" value="1"/>
</dbReference>
<dbReference type="InterPro" id="IPR000148">
    <property type="entry name" value="Papilloma_E7"/>
</dbReference>
<dbReference type="Pfam" id="PF00527">
    <property type="entry name" value="E7"/>
    <property type="match status" value="1"/>
</dbReference>
<dbReference type="PIRSF" id="PIRSF003407">
    <property type="entry name" value="Papvi_E7"/>
    <property type="match status" value="1"/>
</dbReference>
<dbReference type="SUPFAM" id="SSF161234">
    <property type="entry name" value="E7 C-terminal domain-like"/>
    <property type="match status" value="1"/>
</dbReference>
<proteinExistence type="inferred from homology"/>
<keyword id="KW-0010">Activator</keyword>
<keyword id="KW-0238">DNA-binding</keyword>
<keyword id="KW-0244">Early protein</keyword>
<keyword id="KW-1078">G1/S host cell cycle checkpoint dysregulation by virus</keyword>
<keyword id="KW-1035">Host cytoplasm</keyword>
<keyword id="KW-1048">Host nucleus</keyword>
<keyword id="KW-0945">Host-virus interaction</keyword>
<keyword id="KW-1090">Inhibition of host innate immune response by virus</keyword>
<keyword id="KW-1114">Inhibition of host interferon signaling pathway by virus</keyword>
<keyword id="KW-0922">Interferon antiviral system evasion</keyword>
<keyword id="KW-0479">Metal-binding</keyword>
<keyword id="KW-1121">Modulation of host cell cycle by virus</keyword>
<keyword id="KW-0553">Oncogene</keyword>
<keyword id="KW-0804">Transcription</keyword>
<keyword id="KW-0805">Transcription regulation</keyword>
<keyword id="KW-0899">Viral immunoevasion</keyword>
<keyword id="KW-0862">Zinc</keyword>
<keyword id="KW-0863">Zinc-finger</keyword>
<feature type="chain" id="PRO_0000133400" description="Protein E7">
    <location>
        <begin position="1"/>
        <end position="92"/>
    </location>
</feature>
<feature type="zinc finger region" evidence="1">
    <location>
        <begin position="55"/>
        <end position="91"/>
    </location>
</feature>
<feature type="region of interest" description="E7 terminal domain" evidence="1">
    <location>
        <begin position="1"/>
        <end position="43"/>
    </location>
</feature>
<feature type="short sequence motif" description="LXCXE motif; interaction with host RB1 and TMEM173/STING" evidence="1">
    <location>
        <begin position="24"/>
        <end position="28"/>
    </location>
</feature>
<feature type="short sequence motif" description="Nuclear export signal" evidence="1">
    <location>
        <begin position="73"/>
        <end position="81"/>
    </location>
</feature>
<protein>
    <recommendedName>
        <fullName evidence="1">Protein E7</fullName>
    </recommendedName>
</protein>
<name>VE7_HPV2A</name>
<accession>P25485</accession>
<evidence type="ECO:0000255" key="1">
    <source>
        <dbReference type="HAMAP-Rule" id="MF_04004"/>
    </source>
</evidence>
<reference key="1">
    <citation type="journal article" date="1990" name="Virus Res.">
        <title>A comparative sequence analysis of two human papillomavirus (HPV) types 2a and 57.</title>
        <authorList>
            <person name="Hirsch-Behnam A."/>
            <person name="Delius H."/>
            <person name="de Villiers E.M."/>
        </authorList>
    </citation>
    <scope>NUCLEOTIDE SEQUENCE [GENOMIC DNA]</scope>
</reference>
<reference key="2">
    <citation type="journal article" date="2002" name="Rev. Med. Virol.">
        <title>Interactions of SV40 large T antigen and other viral proteins with retinoblastoma tumour suppressor.</title>
        <authorList>
            <person name="Lee C."/>
            <person name="Cho Y."/>
        </authorList>
    </citation>
    <scope>REVIEW</scope>
</reference>
<organismHost>
    <name type="scientific">Homo sapiens</name>
    <name type="common">Human</name>
    <dbReference type="NCBI Taxonomy" id="9606"/>
</organismHost>
<comment type="function">
    <text evidence="1">Plays a role in viral genome replication by driving entry of quiescent cells into the cell cycle. Stimulation of progression from G1 to S phase allows the virus to efficiently use the cellular DNA replicating machinery to achieve viral genome replication. E7 protein has both transforming and trans-activating activities. Induces the disassembly of the E2F1 transcription factor from RB1, with subsequent transcriptional activation of E2F1-regulated S-phase genes. Interferes with host histone deacetylation mediated by HDAC1 and HDAC2, leading to transcription activation. Also plays a role in the inhibition of both antiviral and antiproliferative functions of host interferon alpha. Interaction with host TMEM173/STING impairs the ability of TMEM173/STING to sense cytosolic DNA and promote the production of type I interferon (IFN-alpha and IFN-beta).</text>
</comment>
<comment type="subunit">
    <text evidence="1">Homodimer. Homooligomer. Interacts with host RB1; this interaction induces dissociation of RB1-E2F1 complex thereby disrupting RB1 activity. Interacts with host EP300; this interaction represses EP300 transcriptional activity. Interacts with protein E2; this interaction inhibits E7 oncogenic activity. Interacts with host TMEM173/STING; this interaction impairs the ability of TMEM173/STING to sense cytosolic DNA and promote the production of type I interferon (IFN-alpha and IFN-beta).</text>
</comment>
<comment type="subcellular location">
    <subcellularLocation>
        <location evidence="1">Host cytoplasm</location>
    </subcellularLocation>
    <subcellularLocation>
        <location evidence="1">Host nucleus</location>
    </subcellularLocation>
    <text evidence="1">Predominantly found in the host nucleus.</text>
</comment>
<comment type="domain">
    <text evidence="1">The E7 terminal domain is an intrinsically disordered domain, whose flexibility and conformational transitions confer target adaptability to the oncoprotein. It allows adaptation to a variety of protein targets and exposes the PEST degradation sequence that regulates its turnover in the cell.</text>
</comment>
<comment type="PTM">
    <text evidence="1">Highly phosphorylated.</text>
</comment>
<comment type="similarity">
    <text evidence="1">Belongs to the papillomaviridae E7 protein family.</text>
</comment>
<organism>
    <name type="scientific">Human papillomavirus type 2a</name>
    <dbReference type="NCBI Taxonomy" id="10584"/>
    <lineage>
        <taxon>Viruses</taxon>
        <taxon>Monodnaviria</taxon>
        <taxon>Shotokuvirae</taxon>
        <taxon>Cossaviricota</taxon>
        <taxon>Papovaviricetes</taxon>
        <taxon>Zurhausenvirales</taxon>
        <taxon>Papillomaviridae</taxon>
        <taxon>Firstpapillomavirinae</taxon>
        <taxon>Alphapapillomavirus</taxon>
        <taxon>Alphapapillomavirus 4</taxon>
    </lineage>
</organism>
<sequence>MHGNRPSLKDITLILDEIPEIVDLHCDEQFDSSEEENNHQLTEPDVQAYGVVTTCCKCGRTVRLVVECGQADLRELEQLFLKTLTLVCPHCA</sequence>